<comment type="function">
    <text evidence="1">Cell wall formation. Catalyzes the addition of glutamate to the nucleotide precursor UDP-N-acetylmuramoyl-L-alanine (UMA).</text>
</comment>
<comment type="catalytic activity">
    <reaction evidence="1">
        <text>UDP-N-acetyl-alpha-D-muramoyl-L-alanine + D-glutamate + ATP = UDP-N-acetyl-alpha-D-muramoyl-L-alanyl-D-glutamate + ADP + phosphate + H(+)</text>
        <dbReference type="Rhea" id="RHEA:16429"/>
        <dbReference type="ChEBI" id="CHEBI:15378"/>
        <dbReference type="ChEBI" id="CHEBI:29986"/>
        <dbReference type="ChEBI" id="CHEBI:30616"/>
        <dbReference type="ChEBI" id="CHEBI:43474"/>
        <dbReference type="ChEBI" id="CHEBI:83898"/>
        <dbReference type="ChEBI" id="CHEBI:83900"/>
        <dbReference type="ChEBI" id="CHEBI:456216"/>
        <dbReference type="EC" id="6.3.2.9"/>
    </reaction>
</comment>
<comment type="pathway">
    <text evidence="1">Cell wall biogenesis; peptidoglycan biosynthesis.</text>
</comment>
<comment type="subcellular location">
    <subcellularLocation>
        <location evidence="1">Cytoplasm</location>
    </subcellularLocation>
</comment>
<comment type="similarity">
    <text evidence="1">Belongs to the MurCDEF family.</text>
</comment>
<evidence type="ECO:0000255" key="1">
    <source>
        <dbReference type="HAMAP-Rule" id="MF_00639"/>
    </source>
</evidence>
<dbReference type="EC" id="6.3.2.9" evidence="1"/>
<dbReference type="EMBL" id="CP001358">
    <property type="protein sequence ID" value="ACL49016.1"/>
    <property type="molecule type" value="Genomic_DNA"/>
</dbReference>
<dbReference type="SMR" id="B8IZT9"/>
<dbReference type="STRING" id="525146.Ddes_1111"/>
<dbReference type="KEGG" id="dds:Ddes_1111"/>
<dbReference type="eggNOG" id="COG0771">
    <property type="taxonomic scope" value="Bacteria"/>
</dbReference>
<dbReference type="HOGENOM" id="CLU_032540_0_0_7"/>
<dbReference type="UniPathway" id="UPA00219"/>
<dbReference type="GO" id="GO:0005737">
    <property type="term" value="C:cytoplasm"/>
    <property type="evidence" value="ECO:0007669"/>
    <property type="project" value="UniProtKB-SubCell"/>
</dbReference>
<dbReference type="GO" id="GO:0005524">
    <property type="term" value="F:ATP binding"/>
    <property type="evidence" value="ECO:0007669"/>
    <property type="project" value="UniProtKB-UniRule"/>
</dbReference>
<dbReference type="GO" id="GO:0008764">
    <property type="term" value="F:UDP-N-acetylmuramoylalanine-D-glutamate ligase activity"/>
    <property type="evidence" value="ECO:0007669"/>
    <property type="project" value="UniProtKB-UniRule"/>
</dbReference>
<dbReference type="GO" id="GO:0051301">
    <property type="term" value="P:cell division"/>
    <property type="evidence" value="ECO:0007669"/>
    <property type="project" value="UniProtKB-KW"/>
</dbReference>
<dbReference type="GO" id="GO:0071555">
    <property type="term" value="P:cell wall organization"/>
    <property type="evidence" value="ECO:0007669"/>
    <property type="project" value="UniProtKB-KW"/>
</dbReference>
<dbReference type="GO" id="GO:0009252">
    <property type="term" value="P:peptidoglycan biosynthetic process"/>
    <property type="evidence" value="ECO:0007669"/>
    <property type="project" value="UniProtKB-UniRule"/>
</dbReference>
<dbReference type="GO" id="GO:0008360">
    <property type="term" value="P:regulation of cell shape"/>
    <property type="evidence" value="ECO:0007669"/>
    <property type="project" value="UniProtKB-KW"/>
</dbReference>
<dbReference type="Gene3D" id="3.90.190.20">
    <property type="entry name" value="Mur ligase, C-terminal domain"/>
    <property type="match status" value="1"/>
</dbReference>
<dbReference type="Gene3D" id="3.40.1190.10">
    <property type="entry name" value="Mur-like, catalytic domain"/>
    <property type="match status" value="1"/>
</dbReference>
<dbReference type="Gene3D" id="3.40.50.720">
    <property type="entry name" value="NAD(P)-binding Rossmann-like Domain"/>
    <property type="match status" value="1"/>
</dbReference>
<dbReference type="HAMAP" id="MF_00639">
    <property type="entry name" value="MurD"/>
    <property type="match status" value="1"/>
</dbReference>
<dbReference type="InterPro" id="IPR036565">
    <property type="entry name" value="Mur-like_cat_sf"/>
</dbReference>
<dbReference type="InterPro" id="IPR004101">
    <property type="entry name" value="Mur_ligase_C"/>
</dbReference>
<dbReference type="InterPro" id="IPR036615">
    <property type="entry name" value="Mur_ligase_C_dom_sf"/>
</dbReference>
<dbReference type="InterPro" id="IPR013221">
    <property type="entry name" value="Mur_ligase_cen"/>
</dbReference>
<dbReference type="InterPro" id="IPR005762">
    <property type="entry name" value="MurD"/>
</dbReference>
<dbReference type="NCBIfam" id="TIGR01087">
    <property type="entry name" value="murD"/>
    <property type="match status" value="1"/>
</dbReference>
<dbReference type="PANTHER" id="PTHR43692">
    <property type="entry name" value="UDP-N-ACETYLMURAMOYLALANINE--D-GLUTAMATE LIGASE"/>
    <property type="match status" value="1"/>
</dbReference>
<dbReference type="PANTHER" id="PTHR43692:SF1">
    <property type="entry name" value="UDP-N-ACETYLMURAMOYLALANINE--D-GLUTAMATE LIGASE"/>
    <property type="match status" value="1"/>
</dbReference>
<dbReference type="Pfam" id="PF02875">
    <property type="entry name" value="Mur_ligase_C"/>
    <property type="match status" value="1"/>
</dbReference>
<dbReference type="Pfam" id="PF08245">
    <property type="entry name" value="Mur_ligase_M"/>
    <property type="match status" value="1"/>
</dbReference>
<dbReference type="Pfam" id="PF21799">
    <property type="entry name" value="MurD-like_N"/>
    <property type="match status" value="1"/>
</dbReference>
<dbReference type="Pfam" id="PF13450">
    <property type="entry name" value="NAD_binding_8"/>
    <property type="match status" value="1"/>
</dbReference>
<dbReference type="SUPFAM" id="SSF51984">
    <property type="entry name" value="MurCD N-terminal domain"/>
    <property type="match status" value="1"/>
</dbReference>
<dbReference type="SUPFAM" id="SSF53623">
    <property type="entry name" value="MurD-like peptide ligases, catalytic domain"/>
    <property type="match status" value="1"/>
</dbReference>
<dbReference type="SUPFAM" id="SSF53244">
    <property type="entry name" value="MurD-like peptide ligases, peptide-binding domain"/>
    <property type="match status" value="1"/>
</dbReference>
<feature type="chain" id="PRO_1000147405" description="UDP-N-acetylmuramoylalanine--D-glutamate ligase">
    <location>
        <begin position="1"/>
        <end position="434"/>
    </location>
</feature>
<feature type="binding site" evidence="1">
    <location>
        <begin position="126"/>
        <end position="132"/>
    </location>
    <ligand>
        <name>ATP</name>
        <dbReference type="ChEBI" id="CHEBI:30616"/>
    </ligand>
</feature>
<keyword id="KW-0067">ATP-binding</keyword>
<keyword id="KW-0131">Cell cycle</keyword>
<keyword id="KW-0132">Cell division</keyword>
<keyword id="KW-0133">Cell shape</keyword>
<keyword id="KW-0961">Cell wall biogenesis/degradation</keyword>
<keyword id="KW-0963">Cytoplasm</keyword>
<keyword id="KW-0436">Ligase</keyword>
<keyword id="KW-0547">Nucleotide-binding</keyword>
<keyword id="KW-0573">Peptidoglycan synthesis</keyword>
<accession>B8IZT9</accession>
<reference key="1">
    <citation type="submission" date="2009-01" db="EMBL/GenBank/DDBJ databases">
        <title>Complete sequence of Desulfovibrio desulfuricans subsp. desulfuricans str. ATCC 27774.</title>
        <authorList>
            <consortium name="US DOE Joint Genome Institute"/>
            <person name="Lucas S."/>
            <person name="Copeland A."/>
            <person name="Lapidus A."/>
            <person name="Glavina del Rio T."/>
            <person name="Tice H."/>
            <person name="Bruce D."/>
            <person name="Goodwin L."/>
            <person name="Pitluck S."/>
            <person name="Sims D."/>
            <person name="Lu M."/>
            <person name="Kiss H."/>
            <person name="Meineke L."/>
            <person name="Brettin T."/>
            <person name="Detter J.C."/>
            <person name="Han C."/>
            <person name="Larimer F."/>
            <person name="Land M."/>
            <person name="Hauser L."/>
            <person name="Kyrpides N."/>
            <person name="Ovchinnikova G."/>
            <person name="Hazen T.C."/>
        </authorList>
    </citation>
    <scope>NUCLEOTIDE SEQUENCE [LARGE SCALE GENOMIC DNA]</scope>
    <source>
        <strain>ATCC 27774 / DSM 6949 / MB</strain>
    </source>
</reference>
<name>MURD_DESDA</name>
<organism>
    <name type="scientific">Desulfovibrio desulfuricans (strain ATCC 27774 / DSM 6949 / MB)</name>
    <dbReference type="NCBI Taxonomy" id="525146"/>
    <lineage>
        <taxon>Bacteria</taxon>
        <taxon>Pseudomonadati</taxon>
        <taxon>Thermodesulfobacteriota</taxon>
        <taxon>Desulfovibrionia</taxon>
        <taxon>Desulfovibrionales</taxon>
        <taxon>Desulfovibrionaceae</taxon>
        <taxon>Desulfovibrio</taxon>
    </lineage>
</organism>
<gene>
    <name evidence="1" type="primary">murD</name>
    <name type="ordered locus">Ddes_1111</name>
</gene>
<proteinExistence type="inferred from homology"/>
<protein>
    <recommendedName>
        <fullName evidence="1">UDP-N-acetylmuramoylalanine--D-glutamate ligase</fullName>
        <ecNumber evidence="1">6.3.2.9</ecNumber>
    </recommendedName>
    <alternativeName>
        <fullName evidence="1">D-glutamic acid-adding enzyme</fullName>
    </alternativeName>
    <alternativeName>
        <fullName evidence="1">UDP-N-acetylmuramoyl-L-alanyl-D-glutamate synthetase</fullName>
    </alternativeName>
</protein>
<sequence length="434" mass="46918">MALEKTRGRRISVGETAVVVGAGRSGLAAARLLCREGAQVRLLDSNADAFSGREALAGELRQLGISIELGPHKPDQFENAAFVVPSPGMPVARLAGLVDEERAEILAEMELAWRYLENEPVLAVTGTSGKTTTASLAAAMLHEQGYAVFLGGNIGTPLSEYVLSGHKADVLVLEISSFQLQTCSTFCPRAGILLNITPNHLDYHKDMAEYTEAKFRLFRCQDEGDLAVLGESLRSLAARYGLKARQVYVSDAGRFSGSSLMGAHNRVNEEAAWQACRLFGVSEENAARALARFAPLPHRLERVRELEGVLFVNDSKCTTVSSLKVALEAFDRPVRLVCGGKFKGGDLAGLADLVKNRVSAVALFGAGREHFERAWQGLVPMTWHASLEPAVKHLAASACRGDVVLMAPATSSFDLYANYEERGKDFKRIVGKLS</sequence>